<reference key="1">
    <citation type="journal article" date="2004" name="Proc. Natl. Acad. Sci. U.S.A.">
        <title>The louse-borne human pathogen Bartonella quintana is a genomic derivative of the zoonotic agent Bartonella henselae.</title>
        <authorList>
            <person name="Alsmark U.C.M."/>
            <person name="Frank A.C."/>
            <person name="Karlberg E.O."/>
            <person name="Legault B.-A."/>
            <person name="Ardell D.H."/>
            <person name="Canbaeck B."/>
            <person name="Eriksson A.-S."/>
            <person name="Naeslund A.K."/>
            <person name="Handley S.A."/>
            <person name="Huvet M."/>
            <person name="La Scola B."/>
            <person name="Holmberg M."/>
            <person name="Andersson S.G.E."/>
        </authorList>
    </citation>
    <scope>NUCLEOTIDE SEQUENCE [LARGE SCALE GENOMIC DNA]</scope>
    <source>
        <strain>Toulouse</strain>
    </source>
</reference>
<gene>
    <name evidence="2" type="primary">mutM</name>
    <name evidence="2" type="synonym">fpg</name>
    <name type="ordered locus">BQ02370</name>
</gene>
<organism>
    <name type="scientific">Bartonella quintana (strain Toulouse)</name>
    <name type="common">Rochalimaea quintana</name>
    <dbReference type="NCBI Taxonomy" id="283165"/>
    <lineage>
        <taxon>Bacteria</taxon>
        <taxon>Pseudomonadati</taxon>
        <taxon>Pseudomonadota</taxon>
        <taxon>Alphaproteobacteria</taxon>
        <taxon>Hyphomicrobiales</taxon>
        <taxon>Bartonellaceae</taxon>
        <taxon>Bartonella</taxon>
    </lineage>
</organism>
<comment type="function">
    <text evidence="2">Involved in base excision repair of DNA damaged by oxidation or by mutagenic agents. Acts as a DNA glycosylase that recognizes and removes damaged bases. Has a preference for oxidized purines, such as 7,8-dihydro-8-oxoguanine (8-oxoG). Has AP (apurinic/apyrimidinic) lyase activity and introduces nicks in the DNA strand. Cleaves the DNA backbone by beta-delta elimination to generate a single-strand break at the site of the removed base with both 3'- and 5'-phosphates.</text>
</comment>
<comment type="catalytic activity">
    <reaction evidence="2">
        <text>Hydrolysis of DNA containing ring-opened 7-methylguanine residues, releasing 2,6-diamino-4-hydroxy-5-(N-methyl)formamidopyrimidine.</text>
        <dbReference type="EC" id="3.2.2.23"/>
    </reaction>
</comment>
<comment type="catalytic activity">
    <reaction evidence="2">
        <text>2'-deoxyribonucleotide-(2'-deoxyribose 5'-phosphate)-2'-deoxyribonucleotide-DNA = a 3'-end 2'-deoxyribonucleotide-(2,3-dehydro-2,3-deoxyribose 5'-phosphate)-DNA + a 5'-end 5'-phospho-2'-deoxyribonucleoside-DNA + H(+)</text>
        <dbReference type="Rhea" id="RHEA:66592"/>
        <dbReference type="Rhea" id="RHEA-COMP:13180"/>
        <dbReference type="Rhea" id="RHEA-COMP:16897"/>
        <dbReference type="Rhea" id="RHEA-COMP:17067"/>
        <dbReference type="ChEBI" id="CHEBI:15378"/>
        <dbReference type="ChEBI" id="CHEBI:136412"/>
        <dbReference type="ChEBI" id="CHEBI:157695"/>
        <dbReference type="ChEBI" id="CHEBI:167181"/>
        <dbReference type="EC" id="4.2.99.18"/>
    </reaction>
</comment>
<comment type="cofactor">
    <cofactor evidence="2">
        <name>Zn(2+)</name>
        <dbReference type="ChEBI" id="CHEBI:29105"/>
    </cofactor>
    <text evidence="2">Binds 1 zinc ion per subunit.</text>
</comment>
<comment type="subunit">
    <text evidence="2">Monomer.</text>
</comment>
<comment type="similarity">
    <text evidence="2">Belongs to the FPG family.</text>
</comment>
<keyword id="KW-0227">DNA damage</keyword>
<keyword id="KW-0234">DNA repair</keyword>
<keyword id="KW-0238">DNA-binding</keyword>
<keyword id="KW-0326">Glycosidase</keyword>
<keyword id="KW-0378">Hydrolase</keyword>
<keyword id="KW-0456">Lyase</keyword>
<keyword id="KW-0479">Metal-binding</keyword>
<keyword id="KW-0511">Multifunctional enzyme</keyword>
<keyword id="KW-0862">Zinc</keyword>
<keyword id="KW-0863">Zinc-finger</keyword>
<name>FPG_BARQU</name>
<proteinExistence type="inferred from homology"/>
<protein>
    <recommendedName>
        <fullName evidence="2">Formamidopyrimidine-DNA glycosylase</fullName>
        <shortName evidence="2">Fapy-DNA glycosylase</shortName>
        <ecNumber evidence="2">3.2.2.23</ecNumber>
    </recommendedName>
    <alternativeName>
        <fullName evidence="2">DNA-(apurinic or apyrimidinic site) lyase MutM</fullName>
        <shortName evidence="2">AP lyase MutM</shortName>
        <ecNumber evidence="2">4.2.99.18</ecNumber>
    </alternativeName>
</protein>
<dbReference type="EC" id="3.2.2.23" evidence="2"/>
<dbReference type="EC" id="4.2.99.18" evidence="2"/>
<dbReference type="EMBL" id="BX897700">
    <property type="protein sequence ID" value="CAF25740.1"/>
    <property type="molecule type" value="Genomic_DNA"/>
</dbReference>
<dbReference type="RefSeq" id="WP_011179050.1">
    <property type="nucleotide sequence ID" value="NC_005955.1"/>
</dbReference>
<dbReference type="SMR" id="Q6G0L3"/>
<dbReference type="KEGG" id="bqu:BQ02370"/>
<dbReference type="eggNOG" id="COG0266">
    <property type="taxonomic scope" value="Bacteria"/>
</dbReference>
<dbReference type="HOGENOM" id="CLU_038423_1_1_5"/>
<dbReference type="OrthoDB" id="9800855at2"/>
<dbReference type="Proteomes" id="UP000000597">
    <property type="component" value="Chromosome"/>
</dbReference>
<dbReference type="GO" id="GO:0034039">
    <property type="term" value="F:8-oxo-7,8-dihydroguanine DNA N-glycosylase activity"/>
    <property type="evidence" value="ECO:0007669"/>
    <property type="project" value="TreeGrafter"/>
</dbReference>
<dbReference type="GO" id="GO:0140078">
    <property type="term" value="F:class I DNA-(apurinic or apyrimidinic site) endonuclease activity"/>
    <property type="evidence" value="ECO:0007669"/>
    <property type="project" value="UniProtKB-EC"/>
</dbReference>
<dbReference type="GO" id="GO:0003684">
    <property type="term" value="F:damaged DNA binding"/>
    <property type="evidence" value="ECO:0007669"/>
    <property type="project" value="InterPro"/>
</dbReference>
<dbReference type="GO" id="GO:0008270">
    <property type="term" value="F:zinc ion binding"/>
    <property type="evidence" value="ECO:0007669"/>
    <property type="project" value="UniProtKB-UniRule"/>
</dbReference>
<dbReference type="GO" id="GO:0006284">
    <property type="term" value="P:base-excision repair"/>
    <property type="evidence" value="ECO:0007669"/>
    <property type="project" value="InterPro"/>
</dbReference>
<dbReference type="CDD" id="cd08966">
    <property type="entry name" value="EcFpg-like_N"/>
    <property type="match status" value="1"/>
</dbReference>
<dbReference type="FunFam" id="1.10.8.50:FF:000003">
    <property type="entry name" value="Formamidopyrimidine-DNA glycosylase"/>
    <property type="match status" value="1"/>
</dbReference>
<dbReference type="Gene3D" id="1.10.8.50">
    <property type="match status" value="1"/>
</dbReference>
<dbReference type="Gene3D" id="3.20.190.10">
    <property type="entry name" value="MutM-like, N-terminal"/>
    <property type="match status" value="1"/>
</dbReference>
<dbReference type="HAMAP" id="MF_00103">
    <property type="entry name" value="Fapy_DNA_glycosyl"/>
    <property type="match status" value="1"/>
</dbReference>
<dbReference type="InterPro" id="IPR015886">
    <property type="entry name" value="DNA_glyclase/AP_lyase_DNA-bd"/>
</dbReference>
<dbReference type="InterPro" id="IPR015887">
    <property type="entry name" value="DNA_glyclase_Znf_dom_DNA_BS"/>
</dbReference>
<dbReference type="InterPro" id="IPR020629">
    <property type="entry name" value="Formamido-pyr_DNA_Glyclase"/>
</dbReference>
<dbReference type="InterPro" id="IPR012319">
    <property type="entry name" value="FPG_cat"/>
</dbReference>
<dbReference type="InterPro" id="IPR035937">
    <property type="entry name" value="MutM-like_N-ter"/>
</dbReference>
<dbReference type="InterPro" id="IPR010979">
    <property type="entry name" value="Ribosomal_uS13-like_H2TH"/>
</dbReference>
<dbReference type="InterPro" id="IPR000214">
    <property type="entry name" value="Znf_DNA_glyclase/AP_lyase"/>
</dbReference>
<dbReference type="InterPro" id="IPR010663">
    <property type="entry name" value="Znf_FPG/IleRS"/>
</dbReference>
<dbReference type="NCBIfam" id="TIGR00577">
    <property type="entry name" value="fpg"/>
    <property type="match status" value="1"/>
</dbReference>
<dbReference type="NCBIfam" id="NF002211">
    <property type="entry name" value="PRK01103.1"/>
    <property type="match status" value="1"/>
</dbReference>
<dbReference type="PANTHER" id="PTHR22993">
    <property type="entry name" value="FORMAMIDOPYRIMIDINE-DNA GLYCOSYLASE"/>
    <property type="match status" value="1"/>
</dbReference>
<dbReference type="PANTHER" id="PTHR22993:SF9">
    <property type="entry name" value="FORMAMIDOPYRIMIDINE-DNA GLYCOSYLASE"/>
    <property type="match status" value="1"/>
</dbReference>
<dbReference type="Pfam" id="PF01149">
    <property type="entry name" value="Fapy_DNA_glyco"/>
    <property type="match status" value="1"/>
</dbReference>
<dbReference type="Pfam" id="PF06831">
    <property type="entry name" value="H2TH"/>
    <property type="match status" value="1"/>
</dbReference>
<dbReference type="Pfam" id="PF06827">
    <property type="entry name" value="zf-FPG_IleRS"/>
    <property type="match status" value="1"/>
</dbReference>
<dbReference type="SMART" id="SM00898">
    <property type="entry name" value="Fapy_DNA_glyco"/>
    <property type="match status" value="1"/>
</dbReference>
<dbReference type="SMART" id="SM01232">
    <property type="entry name" value="H2TH"/>
    <property type="match status" value="1"/>
</dbReference>
<dbReference type="SUPFAM" id="SSF57716">
    <property type="entry name" value="Glucocorticoid receptor-like (DNA-binding domain)"/>
    <property type="match status" value="1"/>
</dbReference>
<dbReference type="SUPFAM" id="SSF81624">
    <property type="entry name" value="N-terminal domain of MutM-like DNA repair proteins"/>
    <property type="match status" value="1"/>
</dbReference>
<dbReference type="SUPFAM" id="SSF46946">
    <property type="entry name" value="S13-like H2TH domain"/>
    <property type="match status" value="1"/>
</dbReference>
<dbReference type="PROSITE" id="PS51068">
    <property type="entry name" value="FPG_CAT"/>
    <property type="match status" value="1"/>
</dbReference>
<dbReference type="PROSITE" id="PS01242">
    <property type="entry name" value="ZF_FPG_1"/>
    <property type="match status" value="1"/>
</dbReference>
<dbReference type="PROSITE" id="PS51066">
    <property type="entry name" value="ZF_FPG_2"/>
    <property type="match status" value="1"/>
</dbReference>
<accession>Q6G0L3</accession>
<evidence type="ECO:0000250" key="1"/>
<evidence type="ECO:0000255" key="2">
    <source>
        <dbReference type="HAMAP-Rule" id="MF_00103"/>
    </source>
</evidence>
<feature type="initiator methionine" description="Removed" evidence="1">
    <location>
        <position position="1"/>
    </location>
</feature>
<feature type="chain" id="PRO_0000228417" description="Formamidopyrimidine-DNA glycosylase">
    <location>
        <begin position="2"/>
        <end position="291"/>
    </location>
</feature>
<feature type="zinc finger region" description="FPG-type" evidence="2">
    <location>
        <begin position="257"/>
        <end position="291"/>
    </location>
</feature>
<feature type="active site" description="Schiff-base intermediate with DNA" evidence="2">
    <location>
        <position position="2"/>
    </location>
</feature>
<feature type="active site" description="Proton donor" evidence="2">
    <location>
        <position position="3"/>
    </location>
</feature>
<feature type="active site" description="Proton donor; for beta-elimination activity" evidence="2">
    <location>
        <position position="58"/>
    </location>
</feature>
<feature type="active site" description="Proton donor; for delta-elimination activity" evidence="2">
    <location>
        <position position="281"/>
    </location>
</feature>
<feature type="binding site" evidence="2">
    <location>
        <position position="100"/>
    </location>
    <ligand>
        <name>DNA</name>
        <dbReference type="ChEBI" id="CHEBI:16991"/>
    </ligand>
</feature>
<feature type="binding site" evidence="2">
    <location>
        <position position="123"/>
    </location>
    <ligand>
        <name>DNA</name>
        <dbReference type="ChEBI" id="CHEBI:16991"/>
    </ligand>
</feature>
<feature type="binding site" evidence="2">
    <location>
        <position position="166"/>
    </location>
    <ligand>
        <name>DNA</name>
        <dbReference type="ChEBI" id="CHEBI:16991"/>
    </ligand>
</feature>
<sequence length="291" mass="33117">MPELPEVETVRRGLEPVITGAKIISITLNRRDLRFPFPEAFSERLVGRTIMELGRRGKYLLFHLSQNETILSHLGMSGSWRIEDDLLRKTYSAAGKFVKHDHFLMDIQAKDGKVYHLTYNDVRRFGFMLLLDTNRIYEHPLLKKLGLEPLSNEFSGRYLQEAFVNKKISLKGVLLDQSIIAGLGNIYVCEALWRSRLSPQRGAFTLALKTVCAREFADSLAQNIRNVIAEAISFGGSTLRDYIRTDGSLGYFQHSFSVYGREGKECFQCGIPITRISQSGRSSFYCSQCQK</sequence>